<proteinExistence type="evidence at transcript level"/>
<accession>Q9SJC6</accession>
<accession>F4IV87</accession>
<accession>Q6NNG2</accession>
<protein>
    <recommendedName>
        <fullName>Nudix hydrolase 5</fullName>
        <shortName>AtNUDT5</shortName>
        <ecNumber>3.6.1.-</ecNumber>
    </recommendedName>
</protein>
<evidence type="ECO:0000250" key="1"/>
<evidence type="ECO:0000255" key="2">
    <source>
        <dbReference type="PROSITE-ProRule" id="PRU00794"/>
    </source>
</evidence>
<evidence type="ECO:0000269" key="3">
    <source>
    </source>
</evidence>
<evidence type="ECO:0000305" key="4"/>
<organism>
    <name type="scientific">Arabidopsis thaliana</name>
    <name type="common">Mouse-ear cress</name>
    <dbReference type="NCBI Taxonomy" id="3702"/>
    <lineage>
        <taxon>Eukaryota</taxon>
        <taxon>Viridiplantae</taxon>
        <taxon>Streptophyta</taxon>
        <taxon>Embryophyta</taxon>
        <taxon>Tracheophyta</taxon>
        <taxon>Spermatophyta</taxon>
        <taxon>Magnoliopsida</taxon>
        <taxon>eudicotyledons</taxon>
        <taxon>Gunneridae</taxon>
        <taxon>Pentapetalae</taxon>
        <taxon>rosids</taxon>
        <taxon>malvids</taxon>
        <taxon>Brassicales</taxon>
        <taxon>Brassicaceae</taxon>
        <taxon>Camelineae</taxon>
        <taxon>Arabidopsis</taxon>
    </lineage>
</organism>
<gene>
    <name type="primary">NUDT5</name>
    <name type="synonym">NUDX5</name>
    <name type="ordered locus">At2g04430</name>
    <name type="ORF">T1O3.16</name>
</gene>
<dbReference type="EC" id="3.6.1.-"/>
<dbReference type="EMBL" id="AC006951">
    <property type="protein sequence ID" value="AAD25835.1"/>
    <property type="status" value="ALT_INIT"/>
    <property type="molecule type" value="Genomic_DNA"/>
</dbReference>
<dbReference type="EMBL" id="CP002685">
    <property type="protein sequence ID" value="AEC05835.1"/>
    <property type="molecule type" value="Genomic_DNA"/>
</dbReference>
<dbReference type="EMBL" id="BT010760">
    <property type="protein sequence ID" value="AAR23730.1"/>
    <property type="molecule type" value="mRNA"/>
</dbReference>
<dbReference type="EMBL" id="BT011326">
    <property type="protein sequence ID" value="AAR92362.1"/>
    <property type="molecule type" value="mRNA"/>
</dbReference>
<dbReference type="PIR" id="E84457">
    <property type="entry name" value="E84457"/>
</dbReference>
<dbReference type="RefSeq" id="NP_001324657.1">
    <property type="nucleotide sequence ID" value="NM_001335236.1"/>
</dbReference>
<dbReference type="RefSeq" id="NP_178524.2">
    <property type="nucleotide sequence ID" value="NM_126476.3"/>
</dbReference>
<dbReference type="SMR" id="Q9SJC6"/>
<dbReference type="FunCoup" id="Q9SJC6">
    <property type="interactions" value="263"/>
</dbReference>
<dbReference type="STRING" id="3702.Q9SJC6"/>
<dbReference type="iPTMnet" id="Q9SJC6"/>
<dbReference type="PaxDb" id="3702-AT2G04430.1"/>
<dbReference type="ProteomicsDB" id="250526"/>
<dbReference type="EnsemblPlants" id="AT2G04430.1">
    <property type="protein sequence ID" value="AT2G04430.1"/>
    <property type="gene ID" value="AT2G04430"/>
</dbReference>
<dbReference type="GeneID" id="814983"/>
<dbReference type="Gramene" id="AT2G04430.1">
    <property type="protein sequence ID" value="AT2G04430.1"/>
    <property type="gene ID" value="AT2G04430"/>
</dbReference>
<dbReference type="KEGG" id="ath:AT2G04430"/>
<dbReference type="Araport" id="AT2G04430"/>
<dbReference type="TAIR" id="AT2G04430">
    <property type="gene designation" value="NUDT5"/>
</dbReference>
<dbReference type="eggNOG" id="KOG0648">
    <property type="taxonomic scope" value="Eukaryota"/>
</dbReference>
<dbReference type="HOGENOM" id="CLU_054299_1_0_1"/>
<dbReference type="InParanoid" id="Q9SJC6"/>
<dbReference type="OrthoDB" id="447842at2759"/>
<dbReference type="BioCyc" id="ARA:AT2G04430-MONOMER"/>
<dbReference type="PRO" id="PR:Q9SJC6"/>
<dbReference type="Proteomes" id="UP000006548">
    <property type="component" value="Chromosome 2"/>
</dbReference>
<dbReference type="ExpressionAtlas" id="Q9SJC6">
    <property type="expression patterns" value="baseline and differential"/>
</dbReference>
<dbReference type="GO" id="GO:0005829">
    <property type="term" value="C:cytosol"/>
    <property type="evidence" value="ECO:0000255"/>
    <property type="project" value="TAIR"/>
</dbReference>
<dbReference type="GO" id="GO:0016787">
    <property type="term" value="F:hydrolase activity"/>
    <property type="evidence" value="ECO:0007669"/>
    <property type="project" value="UniProtKB-KW"/>
</dbReference>
<dbReference type="GO" id="GO:0046872">
    <property type="term" value="F:metal ion binding"/>
    <property type="evidence" value="ECO:0007669"/>
    <property type="project" value="UniProtKB-KW"/>
</dbReference>
<dbReference type="CDD" id="cd04670">
    <property type="entry name" value="NUDIX_ASFGF2_Nudt6"/>
    <property type="match status" value="1"/>
</dbReference>
<dbReference type="FunFam" id="3.40.630.30:FF:000016">
    <property type="entry name" value="nudix hydrolase 2"/>
    <property type="match status" value="1"/>
</dbReference>
<dbReference type="FunFam" id="3.90.79.10:FF:000015">
    <property type="entry name" value="Nudix hydrolase 8"/>
    <property type="match status" value="1"/>
</dbReference>
<dbReference type="Gene3D" id="3.40.630.30">
    <property type="match status" value="1"/>
</dbReference>
<dbReference type="Gene3D" id="3.90.79.10">
    <property type="entry name" value="Nucleoside Triphosphate Pyrophosphohydrolase"/>
    <property type="match status" value="1"/>
</dbReference>
<dbReference type="InterPro" id="IPR015797">
    <property type="entry name" value="NUDIX_hydrolase-like_dom_sf"/>
</dbReference>
<dbReference type="InterPro" id="IPR003293">
    <property type="entry name" value="Nudix_hydrolase6-like"/>
</dbReference>
<dbReference type="InterPro" id="IPR020084">
    <property type="entry name" value="NUDIX_hydrolase_CS"/>
</dbReference>
<dbReference type="InterPro" id="IPR000086">
    <property type="entry name" value="NUDIX_hydrolase_dom"/>
</dbReference>
<dbReference type="InterPro" id="IPR040618">
    <property type="entry name" value="Pre-Nudix"/>
</dbReference>
<dbReference type="PANTHER" id="PTHR13994:SF26">
    <property type="entry name" value="NUDIX HYDROLASE 5-RELATED"/>
    <property type="match status" value="1"/>
</dbReference>
<dbReference type="PANTHER" id="PTHR13994">
    <property type="entry name" value="NUDIX HYDROLASE RELATED"/>
    <property type="match status" value="1"/>
</dbReference>
<dbReference type="Pfam" id="PF00293">
    <property type="entry name" value="NUDIX"/>
    <property type="match status" value="1"/>
</dbReference>
<dbReference type="Pfam" id="PF18290">
    <property type="entry name" value="Nudix_hydro"/>
    <property type="match status" value="1"/>
</dbReference>
<dbReference type="PRINTS" id="PR01356">
    <property type="entry name" value="GFGPROTEIN"/>
</dbReference>
<dbReference type="SUPFAM" id="SSF55811">
    <property type="entry name" value="Nudix"/>
    <property type="match status" value="1"/>
</dbReference>
<dbReference type="PROSITE" id="PS51462">
    <property type="entry name" value="NUDIX"/>
    <property type="match status" value="1"/>
</dbReference>
<dbReference type="PROSITE" id="PS00893">
    <property type="entry name" value="NUDIX_BOX"/>
    <property type="match status" value="1"/>
</dbReference>
<keyword id="KW-0378">Hydrolase</keyword>
<keyword id="KW-0460">Magnesium</keyword>
<keyword id="KW-0464">Manganese</keyword>
<keyword id="KW-0479">Metal-binding</keyword>
<keyword id="KW-1185">Reference proteome</keyword>
<feature type="chain" id="PRO_0000057125" description="Nudix hydrolase 5">
    <location>
        <begin position="1"/>
        <end position="302"/>
    </location>
</feature>
<feature type="domain" description="Nudix hydrolase" evidence="2">
    <location>
        <begin position="122"/>
        <end position="254"/>
    </location>
</feature>
<feature type="short sequence motif" description="Nudix box">
    <location>
        <begin position="159"/>
        <end position="180"/>
    </location>
</feature>
<feature type="binding site" evidence="1">
    <location>
        <position position="174"/>
    </location>
    <ligand>
        <name>Mg(2+)</name>
        <dbReference type="ChEBI" id="CHEBI:18420"/>
    </ligand>
</feature>
<feature type="binding site" evidence="1">
    <location>
        <position position="178"/>
    </location>
    <ligand>
        <name>Mg(2+)</name>
        <dbReference type="ChEBI" id="CHEBI:18420"/>
    </ligand>
</feature>
<name>NUDT5_ARATH</name>
<comment type="function">
    <text evidence="1">Probably mediates the hydrolysis of some nucleoside diphosphate derivatives.</text>
</comment>
<comment type="cofactor">
    <cofactor evidence="1">
        <name>Mg(2+)</name>
        <dbReference type="ChEBI" id="CHEBI:18420"/>
    </cofactor>
    <cofactor evidence="1">
        <name>Mn(2+)</name>
        <dbReference type="ChEBI" id="CHEBI:29035"/>
    </cofactor>
</comment>
<comment type="tissue specificity">
    <text evidence="3">Expressed in roots, stems and leaves.</text>
</comment>
<comment type="similarity">
    <text evidence="4">Belongs to the Nudix hydrolase family.</text>
</comment>
<comment type="sequence caution" evidence="4">
    <conflict type="erroneous initiation">
        <sequence resource="EMBL-CDS" id="AAD25835"/>
    </conflict>
    <text>Truncated N-terminus.</text>
</comment>
<sequence>MGLTKNFAFLVFCCQRYCSMDGEAFEISLLDGEEDRFGGTVVNLMEVESMTIGDFDSKLDVSLKAWKDQGKKGIWIKLPSELSSLVDTAIKKGFTYHHAENEYVMLTFWLPEPPSTLPCNASHRIGIGAFVLNKNGEMLVVQENSGYFKDKNVWKVPTGTIKEGESIWAGAVREVKEETDIDAEFVEVLSFMESHQAVWQRKTDIFFVCELEARTFEIQKQDSEIHAAKWMPVEEYVNQPYHNKEGNEMFKLIANICLKRSREKYTGFVLTTNSAKKSLYCSVDHANLLKETADQASTSLSD</sequence>
<reference key="1">
    <citation type="journal article" date="1999" name="Nature">
        <title>Sequence and analysis of chromosome 2 of the plant Arabidopsis thaliana.</title>
        <authorList>
            <person name="Lin X."/>
            <person name="Kaul S."/>
            <person name="Rounsley S.D."/>
            <person name="Shea T.P."/>
            <person name="Benito M.-I."/>
            <person name="Town C.D."/>
            <person name="Fujii C.Y."/>
            <person name="Mason T.M."/>
            <person name="Bowman C.L."/>
            <person name="Barnstead M.E."/>
            <person name="Feldblyum T.V."/>
            <person name="Buell C.R."/>
            <person name="Ketchum K.A."/>
            <person name="Lee J.J."/>
            <person name="Ronning C.M."/>
            <person name="Koo H.L."/>
            <person name="Moffat K.S."/>
            <person name="Cronin L.A."/>
            <person name="Shen M."/>
            <person name="Pai G."/>
            <person name="Van Aken S."/>
            <person name="Umayam L."/>
            <person name="Tallon L.J."/>
            <person name="Gill J.E."/>
            <person name="Adams M.D."/>
            <person name="Carrera A.J."/>
            <person name="Creasy T.H."/>
            <person name="Goodman H.M."/>
            <person name="Somerville C.R."/>
            <person name="Copenhaver G.P."/>
            <person name="Preuss D."/>
            <person name="Nierman W.C."/>
            <person name="White O."/>
            <person name="Eisen J.A."/>
            <person name="Salzberg S.L."/>
            <person name="Fraser C.M."/>
            <person name="Venter J.C."/>
        </authorList>
    </citation>
    <scope>NUCLEOTIDE SEQUENCE [LARGE SCALE GENOMIC DNA]</scope>
    <source>
        <strain>cv. Columbia</strain>
    </source>
</reference>
<reference key="2">
    <citation type="journal article" date="2017" name="Plant J.">
        <title>Araport11: a complete reannotation of the Arabidopsis thaliana reference genome.</title>
        <authorList>
            <person name="Cheng C.Y."/>
            <person name="Krishnakumar V."/>
            <person name="Chan A.P."/>
            <person name="Thibaud-Nissen F."/>
            <person name="Schobel S."/>
            <person name="Town C.D."/>
        </authorList>
    </citation>
    <scope>GENOME REANNOTATION</scope>
    <source>
        <strain>cv. Columbia</strain>
    </source>
</reference>
<reference key="3">
    <citation type="submission" date="2004-01" db="EMBL/GenBank/DDBJ databases">
        <authorList>
            <person name="Cheuk R.F."/>
            <person name="Chen H."/>
            <person name="Kim C.J."/>
            <person name="Shinn P."/>
            <person name="Ecker J.R."/>
        </authorList>
    </citation>
    <scope>NUCLEOTIDE SEQUENCE [LARGE SCALE MRNA]</scope>
    <source>
        <strain>cv. Columbia</strain>
    </source>
</reference>
<reference key="4">
    <citation type="journal article" date="2005" name="J. Biol. Chem.">
        <title>Comprehensive analysis of cytosolic nudix hydrolases in Arabidopsis thaliana.</title>
        <authorList>
            <person name="Ogawa T."/>
            <person name="Ueda Y."/>
            <person name="Yoshimura K."/>
            <person name="Shigeoka S."/>
        </authorList>
    </citation>
    <scope>TISSUE SPECIFICITY</scope>
</reference>